<dbReference type="EMBL" id="S45406">
    <property type="protein sequence ID" value="AAB23597.2"/>
    <property type="molecule type" value="Genomic_DNA"/>
</dbReference>
<dbReference type="EMBL" id="X54855">
    <property type="protein sequence ID" value="CAA38634.1"/>
    <property type="molecule type" value="mRNA"/>
</dbReference>
<dbReference type="PIR" id="S13719">
    <property type="entry name" value="S13719"/>
</dbReference>
<dbReference type="RefSeq" id="NP_001312940.1">
    <property type="nucleotide sequence ID" value="NM_001326011.1"/>
</dbReference>
<dbReference type="SMR" id="P21653"/>
<dbReference type="STRING" id="4097.P21653"/>
<dbReference type="PaxDb" id="4097-P21653"/>
<dbReference type="ProMEX" id="P21653"/>
<dbReference type="GeneID" id="107817944"/>
<dbReference type="KEGG" id="nta:107817944"/>
<dbReference type="OMA" id="FWVGPIS"/>
<dbReference type="OrthoDB" id="3222at2759"/>
<dbReference type="PhylomeDB" id="P21653"/>
<dbReference type="Proteomes" id="UP000084051">
    <property type="component" value="Unplaced"/>
</dbReference>
<dbReference type="GO" id="GO:0009705">
    <property type="term" value="C:plant-type vacuole membrane"/>
    <property type="evidence" value="ECO:0000318"/>
    <property type="project" value="GO_Central"/>
</dbReference>
<dbReference type="GO" id="GO:0015250">
    <property type="term" value="F:water channel activity"/>
    <property type="evidence" value="ECO:0000318"/>
    <property type="project" value="GO_Central"/>
</dbReference>
<dbReference type="GO" id="GO:0006833">
    <property type="term" value="P:water transport"/>
    <property type="evidence" value="ECO:0000318"/>
    <property type="project" value="GO_Central"/>
</dbReference>
<dbReference type="CDD" id="cd00333">
    <property type="entry name" value="MIP"/>
    <property type="match status" value="1"/>
</dbReference>
<dbReference type="FunFam" id="1.20.1080.10:FF:000002">
    <property type="entry name" value="Probable aquaporin TIP1-1"/>
    <property type="match status" value="1"/>
</dbReference>
<dbReference type="Gene3D" id="1.20.1080.10">
    <property type="entry name" value="Glycerol uptake facilitator protein"/>
    <property type="match status" value="1"/>
</dbReference>
<dbReference type="InterPro" id="IPR023271">
    <property type="entry name" value="Aquaporin-like"/>
</dbReference>
<dbReference type="InterPro" id="IPR034294">
    <property type="entry name" value="Aquaporin_transptr"/>
</dbReference>
<dbReference type="InterPro" id="IPR000425">
    <property type="entry name" value="MIP"/>
</dbReference>
<dbReference type="InterPro" id="IPR022357">
    <property type="entry name" value="MIP_CS"/>
</dbReference>
<dbReference type="NCBIfam" id="TIGR00861">
    <property type="entry name" value="MIP"/>
    <property type="match status" value="1"/>
</dbReference>
<dbReference type="PANTHER" id="PTHR45665:SF37">
    <property type="entry name" value="AQUAPORIN TIP2-3-RELATED"/>
    <property type="match status" value="1"/>
</dbReference>
<dbReference type="PANTHER" id="PTHR45665">
    <property type="entry name" value="AQUAPORIN-8"/>
    <property type="match status" value="1"/>
</dbReference>
<dbReference type="Pfam" id="PF00230">
    <property type="entry name" value="MIP"/>
    <property type="match status" value="1"/>
</dbReference>
<dbReference type="PRINTS" id="PR00783">
    <property type="entry name" value="MINTRINSICP"/>
</dbReference>
<dbReference type="SUPFAM" id="SSF81338">
    <property type="entry name" value="Aquaporin-like"/>
    <property type="match status" value="1"/>
</dbReference>
<dbReference type="PROSITE" id="PS00221">
    <property type="entry name" value="MIP"/>
    <property type="match status" value="1"/>
</dbReference>
<organism>
    <name type="scientific">Nicotiana tabacum</name>
    <name type="common">Common tobacco</name>
    <dbReference type="NCBI Taxonomy" id="4097"/>
    <lineage>
        <taxon>Eukaryota</taxon>
        <taxon>Viridiplantae</taxon>
        <taxon>Streptophyta</taxon>
        <taxon>Embryophyta</taxon>
        <taxon>Tracheophyta</taxon>
        <taxon>Spermatophyta</taxon>
        <taxon>Magnoliopsida</taxon>
        <taxon>eudicotyledons</taxon>
        <taxon>Gunneridae</taxon>
        <taxon>Pentapetalae</taxon>
        <taxon>asterids</taxon>
        <taxon>lamiids</taxon>
        <taxon>Solanales</taxon>
        <taxon>Solanaceae</taxon>
        <taxon>Nicotianoideae</taxon>
        <taxon>Nicotianeae</taxon>
        <taxon>Nicotiana</taxon>
    </lineage>
</organism>
<keyword id="KW-0472">Membrane</keyword>
<keyword id="KW-1185">Reference proteome</keyword>
<keyword id="KW-0677">Repeat</keyword>
<keyword id="KW-0812">Transmembrane</keyword>
<keyword id="KW-1133">Transmembrane helix</keyword>
<keyword id="KW-0813">Transport</keyword>
<keyword id="KW-0926">Vacuole</keyword>
<name>TIP1_TOBAC</name>
<evidence type="ECO:0000255" key="1"/>
<evidence type="ECO:0000305" key="2"/>
<feature type="chain" id="PRO_0000064043" description="Probable aquaporin TIP-type RB7-5A">
    <location>
        <begin position="1"/>
        <end position="250"/>
    </location>
</feature>
<feature type="transmembrane region" description="Helical; Name=1" evidence="1">
    <location>
        <begin position="20"/>
        <end position="42"/>
    </location>
</feature>
<feature type="transmembrane region" description="Helical; Name=2" evidence="1">
    <location>
        <begin position="55"/>
        <end position="77"/>
    </location>
</feature>
<feature type="transmembrane region" description="Helical; Name=3" evidence="1">
    <location>
        <begin position="97"/>
        <end position="119"/>
    </location>
</feature>
<feature type="transmembrane region" description="Helical; Name=4" evidence="1">
    <location>
        <begin position="140"/>
        <end position="162"/>
    </location>
</feature>
<feature type="transmembrane region" description="Helical; Name=5" evidence="1">
    <location>
        <begin position="172"/>
        <end position="194"/>
    </location>
</feature>
<feature type="transmembrane region" description="Helical; Name=6" evidence="1">
    <location>
        <begin position="215"/>
        <end position="237"/>
    </location>
</feature>
<feature type="short sequence motif" description="NPA 1">
    <location>
        <begin position="83"/>
        <end position="85"/>
    </location>
</feature>
<feature type="short sequence motif" description="NPA 2">
    <location>
        <begin position="197"/>
        <end position="199"/>
    </location>
</feature>
<proteinExistence type="evidence at transcript level"/>
<reference key="1">
    <citation type="journal article" date="1991" name="Plant Cell">
        <title>Characterization of cis-acting sequences regulating root-specific gene expression in tobacco.</title>
        <authorList>
            <person name="Yamamoto Y.T."/>
            <person name="Taylor C.G."/>
            <person name="Acedo G.N."/>
            <person name="Cheng C.-L."/>
            <person name="Conkling M.A."/>
        </authorList>
    </citation>
    <scope>NUCLEOTIDE SEQUENCE [GENOMIC DNA]</scope>
</reference>
<reference key="2">
    <citation type="journal article" date="1990" name="Nucleic Acids Res.">
        <title>Root-specific genes from tobacco and Arabidopsis homologous to an evolutionarily conserved gene family of membrane channel proteins.</title>
        <authorList>
            <person name="Yamamoto Y.T."/>
            <person name="Cheng C.-L."/>
            <person name="Conkling M.A."/>
        </authorList>
    </citation>
    <scope>NUCLEOTIDE SEQUENCE [MRNA]</scope>
    <source>
        <strain>cv. Wisconsin 38</strain>
        <tissue>Root</tissue>
    </source>
</reference>
<protein>
    <recommendedName>
        <fullName>Probable aquaporin TIP-type RB7-5A</fullName>
    </recommendedName>
    <alternativeName>
        <fullName>RT-TIP</fullName>
    </alternativeName>
    <alternativeName>
        <fullName>TobRB7</fullName>
    </alternativeName>
    <alternativeName>
        <fullName>Tonoplast intrinsic protein, root-specific RB7-5A</fullName>
    </alternativeName>
</protein>
<accession>P21653</accession>
<sequence>MVRIAFGSIGDSFSVGSLKAYVAEFIATLLFVFAGVGSAIAYNKLTADAALDPAGLVAVAVAHAFALFVGVSIAANISGGHLNPAVTLGLAVGGNITILTGFFYWIAQLLGSTVACLLLKYVTNGLAVPTHGVAAGLNGLQGVVMEIIITFALVYTVYATAADPKKGSLGTIAPIAIGFIVGANILAAGPFSGGSMNPARSFGPAVVAGDFSQNWIYWAGPLIGGGLAGFIYGDVFIGCHTPLPTSEDYA</sequence>
<comment type="function">
    <text>Channel protein in tonoplast. These proteins may allow the diffusion of amino acids and/or peptides from the vacuolar compartment to the cytoplasm.</text>
</comment>
<comment type="subcellular location">
    <subcellularLocation>
        <location>Vacuole membrane</location>
        <topology>Multi-pass membrane protein</topology>
    </subcellularLocation>
    <text>Tonoplast.</text>
</comment>
<comment type="tissue specificity">
    <text>Roots.</text>
</comment>
<comment type="domain">
    <text>Aquaporins contain two tandem repeats each containing three membrane-spanning domains and a pore-forming loop with the signature motif Asn-Pro-Ala (NPA).</text>
</comment>
<comment type="similarity">
    <text evidence="2">Belongs to the MIP/aquaporin (TC 1.A.8) family. TIP (TC 1.A.8.10) subfamily.</text>
</comment>